<accession>P00778</accession>
<organism>
    <name type="scientific">Lysobacter enzymogenes</name>
    <dbReference type="NCBI Taxonomy" id="69"/>
    <lineage>
        <taxon>Bacteria</taxon>
        <taxon>Pseudomonadati</taxon>
        <taxon>Pseudomonadota</taxon>
        <taxon>Gammaproteobacteria</taxon>
        <taxon>Lysobacterales</taxon>
        <taxon>Lysobacteraceae</taxon>
        <taxon>Lysobacter</taxon>
    </lineage>
</organism>
<protein>
    <recommendedName>
        <fullName>Alpha-lytic protease</fullName>
        <ecNumber>3.4.21.12</ecNumber>
    </recommendedName>
    <alternativeName>
        <fullName>Alpha-lytic endopeptidase</fullName>
    </alternativeName>
</protein>
<comment type="catalytic activity">
    <reaction>
        <text>Preferential cleavage: Ala-|-Xaa, Val-|-Xaa in bacterial cell walls, elastin and other proteins.</text>
        <dbReference type="EC" id="3.4.21.12"/>
    </reaction>
</comment>
<comment type="similarity">
    <text evidence="3">Belongs to the peptidase S1 family.</text>
</comment>
<feature type="signal peptide" evidence="2">
    <location>
        <begin position="1"/>
        <end position="24"/>
    </location>
</feature>
<feature type="propeptide" id="PRO_0000026907">
    <location>
        <begin position="25"/>
        <end position="199"/>
    </location>
</feature>
<feature type="chain" id="PRO_0000026908" description="Alpha-lytic protease">
    <location>
        <begin position="200"/>
        <end position="397"/>
    </location>
</feature>
<feature type="active site" description="Charge relay system" evidence="1">
    <location>
        <position position="235"/>
    </location>
</feature>
<feature type="active site" description="Charge relay system" evidence="1">
    <location>
        <position position="262"/>
    </location>
</feature>
<feature type="active site" description="Charge relay system" evidence="1">
    <location>
        <position position="342"/>
    </location>
</feature>
<feature type="disulfide bond">
    <location>
        <begin position="216"/>
        <end position="236"/>
    </location>
</feature>
<feature type="disulfide bond">
    <location>
        <begin position="300"/>
        <end position="310"/>
    </location>
</feature>
<feature type="disulfide bond">
    <location>
        <begin position="336"/>
        <end position="369"/>
    </location>
</feature>
<feature type="sequence conflict" description="In Ref. 3; AAA74111." evidence="3" ref="3">
    <original>E</original>
    <variation>D</variation>
    <location>
        <position position="171"/>
    </location>
</feature>
<feature type="helix" evidence="5">
    <location>
        <begin position="40"/>
        <end position="49"/>
    </location>
</feature>
<feature type="helix" evidence="5">
    <location>
        <begin position="53"/>
        <end position="55"/>
    </location>
</feature>
<feature type="helix" evidence="5">
    <location>
        <begin position="56"/>
        <end position="77"/>
    </location>
</feature>
<feature type="helix" evidence="5">
    <location>
        <begin position="78"/>
        <end position="80"/>
    </location>
</feature>
<feature type="strand" evidence="5">
    <location>
        <begin position="81"/>
        <end position="88"/>
    </location>
</feature>
<feature type="strand" evidence="6">
    <location>
        <begin position="90"/>
        <end position="92"/>
    </location>
</feature>
<feature type="strand" evidence="5">
    <location>
        <begin position="94"/>
        <end position="103"/>
    </location>
</feature>
<feature type="strand" evidence="6">
    <location>
        <begin position="108"/>
        <end position="111"/>
    </location>
</feature>
<feature type="strand" evidence="5">
    <location>
        <begin position="112"/>
        <end position="116"/>
    </location>
</feature>
<feature type="helix" evidence="5">
    <location>
        <begin position="121"/>
        <end position="136"/>
    </location>
</feature>
<feature type="strand" evidence="5">
    <location>
        <begin position="149"/>
        <end position="155"/>
    </location>
</feature>
<feature type="helix" evidence="5">
    <location>
        <begin position="156"/>
        <end position="158"/>
    </location>
</feature>
<feature type="strand" evidence="5">
    <location>
        <begin position="160"/>
        <end position="166"/>
    </location>
</feature>
<feature type="helix" evidence="5">
    <location>
        <begin position="170"/>
        <end position="180"/>
    </location>
</feature>
<feature type="turn" evidence="5">
    <location>
        <begin position="184"/>
        <end position="186"/>
    </location>
</feature>
<feature type="strand" evidence="5">
    <location>
        <begin position="187"/>
        <end position="195"/>
    </location>
</feature>
<feature type="strand" evidence="4">
    <location>
        <begin position="201"/>
        <end position="204"/>
    </location>
</feature>
<feature type="strand" evidence="4">
    <location>
        <begin position="207"/>
        <end position="210"/>
    </location>
</feature>
<feature type="turn" evidence="4">
    <location>
        <begin position="211"/>
        <end position="213"/>
    </location>
</feature>
<feature type="strand" evidence="4">
    <location>
        <begin position="214"/>
        <end position="217"/>
    </location>
</feature>
<feature type="strand" evidence="4">
    <location>
        <begin position="220"/>
        <end position="224"/>
    </location>
</feature>
<feature type="strand" evidence="4">
    <location>
        <begin position="227"/>
        <end position="232"/>
    </location>
</feature>
<feature type="helix" evidence="4">
    <location>
        <begin position="234"/>
        <end position="236"/>
    </location>
</feature>
<feature type="strand" evidence="4">
    <location>
        <begin position="242"/>
        <end position="245"/>
    </location>
</feature>
<feature type="strand" evidence="4">
    <location>
        <begin position="248"/>
        <end position="257"/>
    </location>
</feature>
<feature type="strand" evidence="4">
    <location>
        <begin position="259"/>
        <end position="261"/>
    </location>
</feature>
<feature type="strand" evidence="4">
    <location>
        <begin position="263"/>
        <end position="268"/>
    </location>
</feature>
<feature type="strand" evidence="4">
    <location>
        <begin position="272"/>
        <end position="280"/>
    </location>
</feature>
<feature type="strand" evidence="4">
    <location>
        <begin position="283"/>
        <end position="286"/>
    </location>
</feature>
<feature type="strand" evidence="4">
    <location>
        <begin position="298"/>
        <end position="303"/>
    </location>
</feature>
<feature type="turn" evidence="4">
    <location>
        <begin position="304"/>
        <end position="306"/>
    </location>
</feature>
<feature type="strand" evidence="4">
    <location>
        <begin position="307"/>
        <end position="322"/>
    </location>
</feature>
<feature type="strand" evidence="4">
    <location>
        <begin position="325"/>
        <end position="333"/>
    </location>
</feature>
<feature type="strand" evidence="4">
    <location>
        <begin position="345"/>
        <end position="347"/>
    </location>
</feature>
<feature type="strand" evidence="4">
    <location>
        <begin position="352"/>
        <end position="360"/>
    </location>
</feature>
<feature type="strand" evidence="4">
    <location>
        <begin position="366"/>
        <end position="368"/>
    </location>
</feature>
<feature type="helix" evidence="4">
    <location>
        <begin position="373"/>
        <end position="375"/>
    </location>
</feature>
<feature type="strand" evidence="4">
    <location>
        <begin position="378"/>
        <end position="382"/>
    </location>
</feature>
<feature type="helix" evidence="4">
    <location>
        <begin position="383"/>
        <end position="390"/>
    </location>
</feature>
<sequence length="397" mass="41077">MYVSNHRSRRVARVSVSCLVAALAAMSCGAALAADQVDPQLKFAMQRDLGIFPTQLPQYLQTEKLARTQAAAIEREFGAQFAGSWIERNEDGSFKLVAATSGARKSSTLGGVEVRNVRYSLKQLQSAMEQLDAGANARVKGVSKPLDGVQSWYVDPRSNAVVVKVDDGATEAGVDFVALSGADSAQVRIESSPGKLQTTANIVGGIEYSINNASLCSVGFSVTRGATKGFVTAGHCGTVNATARIGGAVVGTFAARVFPGNDRAWVSLTSAQTLLPRVANGSSFVTVRGSTEAAVGAAVCRSGRTTGYQCGTITAKNVTANYAEGAVRGLTQGNACMGRGDSGGSWITSAGQAQGVMSGGNVQSNGNNCGIPASQRSSLFERLQPILSQYGLSLVTG</sequence>
<reference key="1">
    <citation type="journal article" date="1988" name="J. Biol. Chem.">
        <title>The alpha-lytic protease gene of Lysobacter enzymogenes. The nucleotide sequence predicts a large prepro-peptide with homology to pro-peptides of other chymotrypsin-like enzymes.</title>
        <authorList>
            <person name="Epstein D.M."/>
            <person name="Wensink P.C."/>
        </authorList>
    </citation>
    <scope>NUCLEOTIDE SEQUENCE [GENOMIC DNA]</scope>
    <source>
        <strain>ATCC 29487 / DSM 2043 / BCRC 11654 / KCTC 12131 / LMG 8762 / VKM B-2235 / UASM 495 / Ly e1</strain>
    </source>
</reference>
<reference key="2">
    <citation type="submission" date="1989-05" db="EMBL/GenBank/DDBJ databases">
        <authorList>
            <person name="Epstein D.M."/>
        </authorList>
    </citation>
    <scope>SEQUENCE REVISION</scope>
</reference>
<reference key="3">
    <citation type="journal article" date="1988" name="Gene">
        <title>Molecular analysis of the gene encoding alpha-lytic protease: evidence for a preproenzyme.</title>
        <authorList>
            <person name="Silen J.L."/>
            <person name="McGrath C.N."/>
            <person name="Smith K.R."/>
            <person name="Agard D.A."/>
        </authorList>
    </citation>
    <scope>NUCLEOTIDE SEQUENCE [GENOMIC DNA]</scope>
    <source>
        <strain>ATCC 29487 / DSM 2043 / BCRC 11654 / KCTC 12131 / LMG 8762 / VKM B-2235 / UASM 495 / Ly e1</strain>
    </source>
</reference>
<reference key="4">
    <citation type="journal article" date="1970" name="Nature">
        <title>Priaary structure of alpha-lytic protease: a bacterial homologue of the pancreatic serine proteases.</title>
        <authorList>
            <person name="Olson M.O.J."/>
            <person name="Nagabhushan N."/>
            <person name="Dzwiniel M."/>
            <person name="Smillie L.B."/>
            <person name="Whitaker D.R."/>
        </authorList>
    </citation>
    <scope>PROTEIN SEQUENCE OF 199-396</scope>
    <source>
        <strain>ATCC 29487 / DSM 2043 / BCRC 11654 / KCTC 12131 / LMG 8762 / VKM B-2235 / UASM 495 / Ly e1</strain>
    </source>
</reference>
<reference key="5">
    <citation type="journal article" date="1979" name="J. Mol. Biol.">
        <title>Molecular structure of the alpha-lytic protease from Myxobacter 495 at 2.8-A resolution.</title>
        <authorList>
            <person name="Brayer G.D."/>
            <person name="Delbaere L.T.J."/>
            <person name="James M.N.G."/>
        </authorList>
    </citation>
    <scope>X-RAY CRYSTALLOGRAPHY (2.8 ANGSTROMS)</scope>
</reference>
<reference key="6">
    <citation type="journal article" date="1985" name="J. Mol. Biol.">
        <title>Refined structure of alpha-lytic protease at 1.7-A resolution. Analysis of hydrogen bonding and solvent structure.</title>
        <authorList>
            <person name="Fujinaga M."/>
            <person name="Delbaere L.T.J."/>
            <person name="Brayer G.D."/>
            <person name="James M.N.G."/>
        </authorList>
    </citation>
    <scope>X-RAY CRYSTALLOGRAPHY (1.7 ANGSTROMS)</scope>
</reference>
<reference key="7">
    <citation type="journal article" date="1998" name="Biochemistry">
        <title>Pro region C-terminus: protease active site interactions are critical in catalyzing the folding of alpha-lytic protease.</title>
        <authorList>
            <person name="Peters R.J."/>
            <person name="Shiau A.K."/>
            <person name="Sohl J.L."/>
            <person name="Anderson D.E."/>
            <person name="Tang G."/>
            <person name="Silen J.L."/>
            <person name="Agard D.A."/>
        </authorList>
    </citation>
    <scope>X-RAY CRYSTALLOGRAPHY (2.1 ANGSTROMS)</scope>
    <source>
        <strain>ATCC 29487 / DSM 2043 / BCRC 11654 / KCTC 12131 / LMG 8762 / VKM B-2235 / UASM 495 / Ly e1</strain>
    </source>
</reference>
<reference key="8">
    <citation type="journal article" date="1998" name="Nat. Struct. Biol.">
        <title>Structure of alpha-lytic protease complexed with its pro region.</title>
        <authorList>
            <person name="Sauter N.K."/>
            <person name="Mau T."/>
            <person name="Rader S.D."/>
            <person name="Agard D.A."/>
        </authorList>
    </citation>
    <scope>X-RAY CRYSTALLOGRAPHY (1.8 ANGSTROMS)</scope>
</reference>
<evidence type="ECO:0000250" key="1"/>
<evidence type="ECO:0000255" key="2"/>
<evidence type="ECO:0000305" key="3"/>
<evidence type="ECO:0007829" key="4">
    <source>
        <dbReference type="PDB" id="2H5C"/>
    </source>
</evidence>
<evidence type="ECO:0007829" key="5">
    <source>
        <dbReference type="PDB" id="3PRO"/>
    </source>
</evidence>
<evidence type="ECO:0007829" key="6">
    <source>
        <dbReference type="PDB" id="4PRO"/>
    </source>
</evidence>
<proteinExistence type="evidence at protein level"/>
<dbReference type="EC" id="3.4.21.12"/>
<dbReference type="EMBL" id="J04052">
    <property type="protein sequence ID" value="AAA25409.1"/>
    <property type="molecule type" value="Genomic_DNA"/>
</dbReference>
<dbReference type="EMBL" id="M22763">
    <property type="protein sequence ID" value="AAA74111.1"/>
    <property type="molecule type" value="Genomic_DNA"/>
</dbReference>
<dbReference type="PIR" id="A31772">
    <property type="entry name" value="TRYXB4"/>
</dbReference>
<dbReference type="PDB" id="1BOQ">
    <property type="method" value="X-ray"/>
    <property type="resolution" value="2.10 A"/>
    <property type="chains" value="A=200-397"/>
</dbReference>
<dbReference type="PDB" id="1GBA">
    <property type="method" value="X-ray"/>
    <property type="resolution" value="2.15 A"/>
    <property type="chains" value="A=200-397"/>
</dbReference>
<dbReference type="PDB" id="1GBB">
    <property type="method" value="X-ray"/>
    <property type="resolution" value="2.15 A"/>
    <property type="chains" value="A=200-397"/>
</dbReference>
<dbReference type="PDB" id="1GBC">
    <property type="method" value="X-ray"/>
    <property type="resolution" value="2.20 A"/>
    <property type="chains" value="A=200-397"/>
</dbReference>
<dbReference type="PDB" id="1GBD">
    <property type="method" value="X-ray"/>
    <property type="resolution" value="2.20 A"/>
    <property type="chains" value="A=200-397"/>
</dbReference>
<dbReference type="PDB" id="1GBE">
    <property type="method" value="X-ray"/>
    <property type="resolution" value="2.30 A"/>
    <property type="chains" value="A=200-397"/>
</dbReference>
<dbReference type="PDB" id="1GBF">
    <property type="method" value="X-ray"/>
    <property type="resolution" value="2.15 A"/>
    <property type="chains" value="A=200-397"/>
</dbReference>
<dbReference type="PDB" id="1GBH">
    <property type="method" value="X-ray"/>
    <property type="resolution" value="2.20 A"/>
    <property type="chains" value="A=200-397"/>
</dbReference>
<dbReference type="PDB" id="1GBI">
    <property type="method" value="X-ray"/>
    <property type="resolution" value="2.30 A"/>
    <property type="chains" value="A=200-397"/>
</dbReference>
<dbReference type="PDB" id="1GBJ">
    <property type="method" value="X-ray"/>
    <property type="resolution" value="2.00 A"/>
    <property type="chains" value="A=200-397"/>
</dbReference>
<dbReference type="PDB" id="1GBK">
    <property type="method" value="X-ray"/>
    <property type="resolution" value="2.13 A"/>
    <property type="chains" value="A=200-397"/>
</dbReference>
<dbReference type="PDB" id="1GBL">
    <property type="method" value="X-ray"/>
    <property type="resolution" value="2.15 A"/>
    <property type="chains" value="A=200-397"/>
</dbReference>
<dbReference type="PDB" id="1GBM">
    <property type="method" value="X-ray"/>
    <property type="resolution" value="2.28 A"/>
    <property type="chains" value="A=200-397"/>
</dbReference>
<dbReference type="PDB" id="1P01">
    <property type="method" value="X-ray"/>
    <property type="resolution" value="2.00 A"/>
    <property type="chains" value="A=200-397"/>
</dbReference>
<dbReference type="PDB" id="1P02">
    <property type="method" value="X-ray"/>
    <property type="resolution" value="2.00 A"/>
    <property type="chains" value="A=200-397"/>
</dbReference>
<dbReference type="PDB" id="1P03">
    <property type="method" value="X-ray"/>
    <property type="resolution" value="2.15 A"/>
    <property type="chains" value="A=200-397"/>
</dbReference>
<dbReference type="PDB" id="1P04">
    <property type="method" value="X-ray"/>
    <property type="resolution" value="2.55 A"/>
    <property type="chains" value="A=200-397"/>
</dbReference>
<dbReference type="PDB" id="1P05">
    <property type="method" value="X-ray"/>
    <property type="resolution" value="2.10 A"/>
    <property type="chains" value="A=200-397"/>
</dbReference>
<dbReference type="PDB" id="1P06">
    <property type="method" value="X-ray"/>
    <property type="resolution" value="2.34 A"/>
    <property type="chains" value="A=200-397"/>
</dbReference>
<dbReference type="PDB" id="1P09">
    <property type="method" value="X-ray"/>
    <property type="resolution" value="2.20 A"/>
    <property type="chains" value="A=200-397"/>
</dbReference>
<dbReference type="PDB" id="1P10">
    <property type="method" value="X-ray"/>
    <property type="resolution" value="2.25 A"/>
    <property type="chains" value="A=200-397"/>
</dbReference>
<dbReference type="PDB" id="1P11">
    <property type="method" value="X-ray"/>
    <property type="resolution" value="1.93 A"/>
    <property type="chains" value="E=200-397"/>
</dbReference>
<dbReference type="PDB" id="1P12">
    <property type="method" value="X-ray"/>
    <property type="resolution" value="1.90 A"/>
    <property type="chains" value="E=200-397"/>
</dbReference>
<dbReference type="PDB" id="1QQ4">
    <property type="method" value="X-ray"/>
    <property type="resolution" value="1.20 A"/>
    <property type="chains" value="A=200-397"/>
</dbReference>
<dbReference type="PDB" id="1QRW">
    <property type="method" value="X-ray"/>
    <property type="resolution" value="1.20 A"/>
    <property type="chains" value="A=200-397"/>
</dbReference>
<dbReference type="PDB" id="1QRX">
    <property type="method" value="X-ray"/>
    <property type="resolution" value="1.60 A"/>
    <property type="chains" value="A=200-397"/>
</dbReference>
<dbReference type="PDB" id="1SSX">
    <property type="method" value="X-ray"/>
    <property type="resolution" value="0.83 A"/>
    <property type="chains" value="A=200-397"/>
</dbReference>
<dbReference type="PDB" id="1TAL">
    <property type="method" value="X-ray"/>
    <property type="resolution" value="1.50 A"/>
    <property type="chains" value="A=200-397"/>
</dbReference>
<dbReference type="PDB" id="2ALP">
    <property type="method" value="X-ray"/>
    <property type="resolution" value="1.70 A"/>
    <property type="chains" value="A=200-397"/>
</dbReference>
<dbReference type="PDB" id="2H5C">
    <property type="method" value="X-ray"/>
    <property type="resolution" value="0.82 A"/>
    <property type="chains" value="A=200-397"/>
</dbReference>
<dbReference type="PDB" id="2H5D">
    <property type="method" value="X-ray"/>
    <property type="resolution" value="0.90 A"/>
    <property type="chains" value="A=200-397"/>
</dbReference>
<dbReference type="PDB" id="2LPR">
    <property type="method" value="X-ray"/>
    <property type="resolution" value="2.25 A"/>
    <property type="chains" value="A=200-397"/>
</dbReference>
<dbReference type="PDB" id="2PRO">
    <property type="method" value="X-ray"/>
    <property type="resolution" value="3.00 A"/>
    <property type="chains" value="A/B/C=34-199"/>
</dbReference>
<dbReference type="PDB" id="2ULL">
    <property type="method" value="X-ray"/>
    <property type="resolution" value="1.50 A"/>
    <property type="chains" value="A=200-397"/>
</dbReference>
<dbReference type="PDB" id="3LPR">
    <property type="method" value="X-ray"/>
    <property type="resolution" value="2.15 A"/>
    <property type="chains" value="A=200-397"/>
</dbReference>
<dbReference type="PDB" id="3M7T">
    <property type="method" value="X-ray"/>
    <property type="resolution" value="1.55 A"/>
    <property type="chains" value="A=200-397"/>
</dbReference>
<dbReference type="PDB" id="3M7U">
    <property type="method" value="X-ray"/>
    <property type="resolution" value="1.05 A"/>
    <property type="chains" value="A=200-397"/>
</dbReference>
<dbReference type="PDB" id="3PRO">
    <property type="method" value="X-ray"/>
    <property type="resolution" value="1.80 A"/>
    <property type="chains" value="A/B=200-397, C/D=34-199"/>
</dbReference>
<dbReference type="PDB" id="3QGJ">
    <property type="method" value="X-ray"/>
    <property type="resolution" value="1.30 A"/>
    <property type="chains" value="A/C=200-397"/>
</dbReference>
<dbReference type="PDB" id="3URC">
    <property type="method" value="X-ray"/>
    <property type="resolution" value="1.10 A"/>
    <property type="chains" value="A=200-397"/>
</dbReference>
<dbReference type="PDB" id="3URD">
    <property type="method" value="X-ray"/>
    <property type="resolution" value="1.08 A"/>
    <property type="chains" value="A=200-397"/>
</dbReference>
<dbReference type="PDB" id="3URE">
    <property type="method" value="X-ray"/>
    <property type="resolution" value="1.49 A"/>
    <property type="chains" value="A/B=200-397"/>
</dbReference>
<dbReference type="PDB" id="4PRO">
    <property type="method" value="X-ray"/>
    <property type="resolution" value="2.40 A"/>
    <property type="chains" value="A/B=200-397, C/D=34-199"/>
</dbReference>
<dbReference type="PDB" id="5LPR">
    <property type="method" value="X-ray"/>
    <property type="resolution" value="2.13 A"/>
    <property type="chains" value="A=200-397"/>
</dbReference>
<dbReference type="PDB" id="5WOT">
    <property type="method" value="NMR"/>
    <property type="chains" value="A=200-397"/>
</dbReference>
<dbReference type="PDB" id="6LPR">
    <property type="method" value="X-ray"/>
    <property type="resolution" value="2.10 A"/>
    <property type="chains" value="A=200-397"/>
</dbReference>
<dbReference type="PDB" id="7LPR">
    <property type="method" value="X-ray"/>
    <property type="resolution" value="2.05 A"/>
    <property type="chains" value="A=200-397"/>
</dbReference>
<dbReference type="PDB" id="8LPR">
    <property type="method" value="X-ray"/>
    <property type="resolution" value="2.25 A"/>
    <property type="chains" value="A=200-397"/>
</dbReference>
<dbReference type="PDB" id="9LPR">
    <property type="method" value="X-ray"/>
    <property type="resolution" value="2.20 A"/>
    <property type="chains" value="A=200-397"/>
</dbReference>
<dbReference type="PDBsum" id="1BOQ"/>
<dbReference type="PDBsum" id="1GBA"/>
<dbReference type="PDBsum" id="1GBB"/>
<dbReference type="PDBsum" id="1GBC"/>
<dbReference type="PDBsum" id="1GBD"/>
<dbReference type="PDBsum" id="1GBE"/>
<dbReference type="PDBsum" id="1GBF"/>
<dbReference type="PDBsum" id="1GBH"/>
<dbReference type="PDBsum" id="1GBI"/>
<dbReference type="PDBsum" id="1GBJ"/>
<dbReference type="PDBsum" id="1GBK"/>
<dbReference type="PDBsum" id="1GBL"/>
<dbReference type="PDBsum" id="1GBM"/>
<dbReference type="PDBsum" id="1P01"/>
<dbReference type="PDBsum" id="1P02"/>
<dbReference type="PDBsum" id="1P03"/>
<dbReference type="PDBsum" id="1P04"/>
<dbReference type="PDBsum" id="1P05"/>
<dbReference type="PDBsum" id="1P06"/>
<dbReference type="PDBsum" id="1P09"/>
<dbReference type="PDBsum" id="1P10"/>
<dbReference type="PDBsum" id="1P11"/>
<dbReference type="PDBsum" id="1P12"/>
<dbReference type="PDBsum" id="1QQ4"/>
<dbReference type="PDBsum" id="1QRW"/>
<dbReference type="PDBsum" id="1QRX"/>
<dbReference type="PDBsum" id="1SSX"/>
<dbReference type="PDBsum" id="1TAL"/>
<dbReference type="PDBsum" id="2ALP"/>
<dbReference type="PDBsum" id="2H5C"/>
<dbReference type="PDBsum" id="2H5D"/>
<dbReference type="PDBsum" id="2LPR"/>
<dbReference type="PDBsum" id="2PRO"/>
<dbReference type="PDBsum" id="2ULL"/>
<dbReference type="PDBsum" id="3LPR"/>
<dbReference type="PDBsum" id="3M7T"/>
<dbReference type="PDBsum" id="3M7U"/>
<dbReference type="PDBsum" id="3PRO"/>
<dbReference type="PDBsum" id="3QGJ"/>
<dbReference type="PDBsum" id="3URC"/>
<dbReference type="PDBsum" id="3URD"/>
<dbReference type="PDBsum" id="3URE"/>
<dbReference type="PDBsum" id="4PRO"/>
<dbReference type="PDBsum" id="5LPR"/>
<dbReference type="PDBsum" id="5WOT"/>
<dbReference type="PDBsum" id="6LPR"/>
<dbReference type="PDBsum" id="7LPR"/>
<dbReference type="PDBsum" id="8LPR"/>
<dbReference type="PDBsum" id="9LPR"/>
<dbReference type="BMRB" id="P00778"/>
<dbReference type="SMR" id="P00778"/>
<dbReference type="STRING" id="69.GLE_1730"/>
<dbReference type="ChEMBL" id="CHEMBL3085615"/>
<dbReference type="DrugBank" id="DB07411">
    <property type="generic name" value="PHENYLALANINE BORONIC ACID"/>
</dbReference>
<dbReference type="DrugBank" id="DB04237">
    <property type="generic name" value="Tris(Hydroxyethyl)Aminomethane"/>
</dbReference>
<dbReference type="MEROPS" id="S01.268"/>
<dbReference type="KEGG" id="ag:AAA25409"/>
<dbReference type="BRENDA" id="3.4.21.12">
    <property type="organism ID" value="3118"/>
</dbReference>
<dbReference type="EvolutionaryTrace" id="P00778"/>
<dbReference type="GO" id="GO:0005576">
    <property type="term" value="C:extracellular region"/>
    <property type="evidence" value="ECO:0007669"/>
    <property type="project" value="InterPro"/>
</dbReference>
<dbReference type="GO" id="GO:0004252">
    <property type="term" value="F:serine-type endopeptidase activity"/>
    <property type="evidence" value="ECO:0007669"/>
    <property type="project" value="InterPro"/>
</dbReference>
<dbReference type="GO" id="GO:0006508">
    <property type="term" value="P:proteolysis"/>
    <property type="evidence" value="ECO:0007669"/>
    <property type="project" value="UniProtKB-KW"/>
</dbReference>
<dbReference type="CDD" id="cd21112">
    <property type="entry name" value="alphaLP-like"/>
    <property type="match status" value="1"/>
</dbReference>
<dbReference type="Gene3D" id="3.30.300.50">
    <property type="match status" value="2"/>
</dbReference>
<dbReference type="Gene3D" id="2.40.10.10">
    <property type="entry name" value="Trypsin-like serine proteases"/>
    <property type="match status" value="2"/>
</dbReference>
<dbReference type="InterPro" id="IPR037295">
    <property type="entry name" value="Alpha-lytic_protease_prodomain"/>
</dbReference>
<dbReference type="InterPro" id="IPR004236">
    <property type="entry name" value="Pept_S1_alpha_lytic"/>
</dbReference>
<dbReference type="InterPro" id="IPR001316">
    <property type="entry name" value="Pept_S1A_streptogrisin"/>
</dbReference>
<dbReference type="InterPro" id="IPR009003">
    <property type="entry name" value="Peptidase_S1_PA"/>
</dbReference>
<dbReference type="InterPro" id="IPR043504">
    <property type="entry name" value="Peptidase_S1_PA_chymotrypsin"/>
</dbReference>
<dbReference type="InterPro" id="IPR035070">
    <property type="entry name" value="Streptogrisin_prodomain"/>
</dbReference>
<dbReference type="InterPro" id="IPR001254">
    <property type="entry name" value="Trypsin_dom"/>
</dbReference>
<dbReference type="Pfam" id="PF02983">
    <property type="entry name" value="Pro_Al_protease"/>
    <property type="match status" value="1"/>
</dbReference>
<dbReference type="Pfam" id="PF00089">
    <property type="entry name" value="Trypsin"/>
    <property type="match status" value="1"/>
</dbReference>
<dbReference type="PIRSF" id="PIRSF001134">
    <property type="entry name" value="Streptogrisin"/>
    <property type="match status" value="1"/>
</dbReference>
<dbReference type="PRINTS" id="PR00861">
    <property type="entry name" value="ALYTICPTASE"/>
</dbReference>
<dbReference type="SUPFAM" id="SSF54806">
    <property type="entry name" value="Alpha-lytic protease prodomain"/>
    <property type="match status" value="2"/>
</dbReference>
<dbReference type="SUPFAM" id="SSF50494">
    <property type="entry name" value="Trypsin-like serine proteases"/>
    <property type="match status" value="1"/>
</dbReference>
<dbReference type="PROSITE" id="PS00134">
    <property type="entry name" value="TRYPSIN_HIS"/>
    <property type="match status" value="1"/>
</dbReference>
<dbReference type="PROSITE" id="PS00135">
    <property type="entry name" value="TRYPSIN_SER"/>
    <property type="match status" value="1"/>
</dbReference>
<keyword id="KW-0002">3D-structure</keyword>
<keyword id="KW-0903">Direct protein sequencing</keyword>
<keyword id="KW-1015">Disulfide bond</keyword>
<keyword id="KW-0378">Hydrolase</keyword>
<keyword id="KW-0645">Protease</keyword>
<keyword id="KW-0720">Serine protease</keyword>
<keyword id="KW-0732">Signal</keyword>
<keyword id="KW-0865">Zymogen</keyword>
<name>PRLA_LYSEN</name>
<gene>
    <name type="primary">alpha-LP</name>
</gene>